<gene>
    <name evidence="1" type="primary">flgI2</name>
    <name type="ordered locus">CV_2881</name>
</gene>
<protein>
    <recommendedName>
        <fullName evidence="1">Flagellar P-ring protein 2</fullName>
    </recommendedName>
    <alternativeName>
        <fullName evidence="1">Basal body P-ring protein 2</fullName>
    </alternativeName>
</protein>
<reference key="1">
    <citation type="journal article" date="2003" name="Proc. Natl. Acad. Sci. U.S.A.">
        <title>The complete genome sequence of Chromobacterium violaceum reveals remarkable and exploitable bacterial adaptability.</title>
        <authorList>
            <person name="Vasconcelos A.T.R."/>
            <person name="de Almeida D.F."/>
            <person name="Hungria M."/>
            <person name="Guimaraes C.T."/>
            <person name="Antonio R.V."/>
            <person name="Almeida F.C."/>
            <person name="de Almeida L.G.P."/>
            <person name="de Almeida R."/>
            <person name="Alves-Gomes J.A."/>
            <person name="Andrade E.M."/>
            <person name="Araripe J."/>
            <person name="de Araujo M.F.F."/>
            <person name="Astolfi-Filho S."/>
            <person name="Azevedo V."/>
            <person name="Baptista A.J."/>
            <person name="Bataus L.A.M."/>
            <person name="Batista J.S."/>
            <person name="Belo A."/>
            <person name="van den Berg C."/>
            <person name="Bogo M."/>
            <person name="Bonatto S."/>
            <person name="Bordignon J."/>
            <person name="Brigido M.M."/>
            <person name="Brito C.A."/>
            <person name="Brocchi M."/>
            <person name="Burity H.A."/>
            <person name="Camargo A.A."/>
            <person name="Cardoso D.D.P."/>
            <person name="Carneiro N.P."/>
            <person name="Carraro D.M."/>
            <person name="Carvalho C.M.B."/>
            <person name="Cascardo J.C.M."/>
            <person name="Cavada B.S."/>
            <person name="Chueire L.M.O."/>
            <person name="Creczynski-Pasa T.B."/>
            <person name="Cunha-Junior N.C."/>
            <person name="Fagundes N."/>
            <person name="Falcao C.L."/>
            <person name="Fantinatti F."/>
            <person name="Farias I.P."/>
            <person name="Felipe M.S.S."/>
            <person name="Ferrari L.P."/>
            <person name="Ferro J.A."/>
            <person name="Ferro M.I.T."/>
            <person name="Franco G.R."/>
            <person name="Freitas N.S.A."/>
            <person name="Furlan L.R."/>
            <person name="Gazzinelli R.T."/>
            <person name="Gomes E.A."/>
            <person name="Goncalves P.R."/>
            <person name="Grangeiro T.B."/>
            <person name="Grattapaglia D."/>
            <person name="Grisard E.C."/>
            <person name="Hanna E.S."/>
            <person name="Jardim S.N."/>
            <person name="Laurino J."/>
            <person name="Leoi L.C.T."/>
            <person name="Lima L.F.A."/>
            <person name="Loureiro M.F."/>
            <person name="Lyra M.C.C.P."/>
            <person name="Madeira H.M.F."/>
            <person name="Manfio G.P."/>
            <person name="Maranhao A.Q."/>
            <person name="Martins W.S."/>
            <person name="di Mauro S.M.Z."/>
            <person name="de Medeiros S.R.B."/>
            <person name="Meissner R.V."/>
            <person name="Moreira M.A.M."/>
            <person name="Nascimento F.F."/>
            <person name="Nicolas M.F."/>
            <person name="Oliveira J.G."/>
            <person name="Oliveira S.C."/>
            <person name="Paixao R.F.C."/>
            <person name="Parente J.A."/>
            <person name="Pedrosa F.O."/>
            <person name="Pena S.D.J."/>
            <person name="Pereira J.O."/>
            <person name="Pereira M."/>
            <person name="Pinto L.S.R.C."/>
            <person name="Pinto L.S."/>
            <person name="Porto J.I.R."/>
            <person name="Potrich D.P."/>
            <person name="Ramalho-Neto C.E."/>
            <person name="Reis A.M.M."/>
            <person name="Rigo L.U."/>
            <person name="Rondinelli E."/>
            <person name="Santos E.B.P."/>
            <person name="Santos F.R."/>
            <person name="Schneider M.P.C."/>
            <person name="Seuanez H.N."/>
            <person name="Silva A.M.R."/>
            <person name="da Silva A.L.C."/>
            <person name="Silva D.W."/>
            <person name="Silva R."/>
            <person name="Simoes I.C."/>
            <person name="Simon D."/>
            <person name="Soares C.M.A."/>
            <person name="Soares R.B.A."/>
            <person name="Souza E.M."/>
            <person name="Souza K.R.L."/>
            <person name="Souza R.C."/>
            <person name="Steffens M.B.R."/>
            <person name="Steindel M."/>
            <person name="Teixeira S.R."/>
            <person name="Urmenyi T."/>
            <person name="Vettore A."/>
            <person name="Wassem R."/>
            <person name="Zaha A."/>
            <person name="Simpson A.J.G."/>
        </authorList>
    </citation>
    <scope>NUCLEOTIDE SEQUENCE [LARGE SCALE GENOMIC DNA]</scope>
    <source>
        <strain>ATCC 12472 / DSM 30191 / JCM 1249 / CCUG 213 / NBRC 12614 / NCIMB 9131 / NCTC 9757 / MK</strain>
    </source>
</reference>
<proteinExistence type="inferred from homology"/>
<dbReference type="EMBL" id="AE016825">
    <property type="protein sequence ID" value="AAQ60549.1"/>
    <property type="molecule type" value="Genomic_DNA"/>
</dbReference>
<dbReference type="RefSeq" id="WP_011136428.1">
    <property type="nucleotide sequence ID" value="NC_005085.1"/>
</dbReference>
<dbReference type="SMR" id="Q7NU22"/>
<dbReference type="STRING" id="243365.CV_2881"/>
<dbReference type="GeneID" id="66368580"/>
<dbReference type="KEGG" id="cvi:CV_2881"/>
<dbReference type="eggNOG" id="COG1706">
    <property type="taxonomic scope" value="Bacteria"/>
</dbReference>
<dbReference type="HOGENOM" id="CLU_045235_1_0_4"/>
<dbReference type="OrthoDB" id="9786431at2"/>
<dbReference type="Proteomes" id="UP000001424">
    <property type="component" value="Chromosome"/>
</dbReference>
<dbReference type="GO" id="GO:0009428">
    <property type="term" value="C:bacterial-type flagellum basal body, distal rod, P ring"/>
    <property type="evidence" value="ECO:0007669"/>
    <property type="project" value="InterPro"/>
</dbReference>
<dbReference type="GO" id="GO:0030288">
    <property type="term" value="C:outer membrane-bounded periplasmic space"/>
    <property type="evidence" value="ECO:0007669"/>
    <property type="project" value="InterPro"/>
</dbReference>
<dbReference type="GO" id="GO:0005198">
    <property type="term" value="F:structural molecule activity"/>
    <property type="evidence" value="ECO:0007669"/>
    <property type="project" value="InterPro"/>
</dbReference>
<dbReference type="GO" id="GO:0071973">
    <property type="term" value="P:bacterial-type flagellum-dependent cell motility"/>
    <property type="evidence" value="ECO:0007669"/>
    <property type="project" value="InterPro"/>
</dbReference>
<dbReference type="HAMAP" id="MF_00416">
    <property type="entry name" value="FlgI"/>
    <property type="match status" value="1"/>
</dbReference>
<dbReference type="InterPro" id="IPR001782">
    <property type="entry name" value="Flag_FlgI"/>
</dbReference>
<dbReference type="NCBIfam" id="NF003676">
    <property type="entry name" value="PRK05303.1"/>
    <property type="match status" value="1"/>
</dbReference>
<dbReference type="PANTHER" id="PTHR30381">
    <property type="entry name" value="FLAGELLAR P-RING PERIPLASMIC PROTEIN FLGI"/>
    <property type="match status" value="1"/>
</dbReference>
<dbReference type="PANTHER" id="PTHR30381:SF0">
    <property type="entry name" value="FLAGELLAR P-RING PROTEIN"/>
    <property type="match status" value="1"/>
</dbReference>
<dbReference type="Pfam" id="PF02119">
    <property type="entry name" value="FlgI"/>
    <property type="match status" value="1"/>
</dbReference>
<dbReference type="PRINTS" id="PR01010">
    <property type="entry name" value="FLGPRINGFLGI"/>
</dbReference>
<comment type="function">
    <text evidence="1">Assembles around the rod to form the L-ring and probably protects the motor/basal body from shearing forces during rotation.</text>
</comment>
<comment type="subunit">
    <text evidence="1">The basal body constitutes a major portion of the flagellar organelle and consists of four rings (L,P,S, and M) mounted on a central rod.</text>
</comment>
<comment type="subcellular location">
    <subcellularLocation>
        <location evidence="1">Periplasm</location>
    </subcellularLocation>
    <subcellularLocation>
        <location evidence="1">Bacterial flagellum basal body</location>
    </subcellularLocation>
</comment>
<comment type="similarity">
    <text evidence="1">Belongs to the FlgI family.</text>
</comment>
<keyword id="KW-0975">Bacterial flagellum</keyword>
<keyword id="KW-0574">Periplasm</keyword>
<keyword id="KW-1185">Reference proteome</keyword>
<keyword id="KW-0732">Signal</keyword>
<feature type="signal peptide" evidence="1">
    <location>
        <begin position="1"/>
        <end position="19"/>
    </location>
</feature>
<feature type="chain" id="PRO_0000041793" description="Flagellar P-ring protein 2">
    <location>
        <begin position="20"/>
        <end position="365"/>
    </location>
</feature>
<name>FLGI2_CHRVO</name>
<evidence type="ECO:0000255" key="1">
    <source>
        <dbReference type="HAMAP-Rule" id="MF_00416"/>
    </source>
</evidence>
<sequence length="365" mass="37510">MKKWIVMASLLLAALPAMSAQRLKDIANIGGVRPNQLIGYGLVVGLDGSGDKVTSSPFTGQAMINMLNQLGVQVPPGTKIDPKNVAAVTLTATLPPFSKRGQMLDVTASSIGDAKSLRGGTLLLSPLKGADGQIYAMAQGNVVVGGAGASAGGSSTQINQLSVGRIPSGATVEREVQTALGDGEFIHLELQESDFTTANRAVQAINKVFGGDTARAVDGRLIEVRAPFDSNQRVQFLSRMENIAVDPADLSPLVIINARTGSIVMNQAVTLGSCAVSHGNLSVTVNNTPQVSQPNPLSGGKTVVTNQADITINSTSGKVVGLKGGANLSQVVNALNALGATPQDLISILQAMKSAGSLKADLQII</sequence>
<organism>
    <name type="scientific">Chromobacterium violaceum (strain ATCC 12472 / DSM 30191 / JCM 1249 / CCUG 213 / NBRC 12614 / NCIMB 9131 / NCTC 9757 / MK)</name>
    <dbReference type="NCBI Taxonomy" id="243365"/>
    <lineage>
        <taxon>Bacteria</taxon>
        <taxon>Pseudomonadati</taxon>
        <taxon>Pseudomonadota</taxon>
        <taxon>Betaproteobacteria</taxon>
        <taxon>Neisseriales</taxon>
        <taxon>Chromobacteriaceae</taxon>
        <taxon>Chromobacterium</taxon>
    </lineage>
</organism>
<accession>Q7NU22</accession>